<gene>
    <name type="ordered locus">Meso_3659</name>
</gene>
<proteinExistence type="inferred from homology"/>
<evidence type="ECO:0000255" key="1">
    <source>
        <dbReference type="HAMAP-Rule" id="MF_01962"/>
    </source>
</evidence>
<protein>
    <recommendedName>
        <fullName evidence="1">Adenine deaminase</fullName>
        <shortName evidence="1">ADE</shortName>
        <ecNumber evidence="1">3.5.4.2</ecNumber>
    </recommendedName>
    <alternativeName>
        <fullName evidence="1">Adenine aminohydrolase</fullName>
        <shortName evidence="1">AAH</shortName>
    </alternativeName>
</protein>
<feature type="chain" id="PRO_1000017666" description="Adenine deaminase">
    <location>
        <begin position="1"/>
        <end position="325"/>
    </location>
</feature>
<feature type="active site" description="Proton donor" evidence="1">
    <location>
        <position position="189"/>
    </location>
</feature>
<feature type="binding site" evidence="1">
    <location>
        <position position="8"/>
    </location>
    <ligand>
        <name>Zn(2+)</name>
        <dbReference type="ChEBI" id="CHEBI:29105"/>
        <note>catalytic</note>
    </ligand>
</feature>
<feature type="binding site" evidence="1">
    <location>
        <position position="10"/>
    </location>
    <ligand>
        <name>Zn(2+)</name>
        <dbReference type="ChEBI" id="CHEBI:29105"/>
        <note>catalytic</note>
    </ligand>
</feature>
<feature type="binding site" evidence="1">
    <location>
        <position position="186"/>
    </location>
    <ligand>
        <name>Zn(2+)</name>
        <dbReference type="ChEBI" id="CHEBI:29105"/>
        <note>catalytic</note>
    </ligand>
</feature>
<feature type="binding site" evidence="1">
    <location>
        <position position="267"/>
    </location>
    <ligand>
        <name>Zn(2+)</name>
        <dbReference type="ChEBI" id="CHEBI:29105"/>
        <note>catalytic</note>
    </ligand>
</feature>
<feature type="binding site" evidence="1">
    <location>
        <position position="268"/>
    </location>
    <ligand>
        <name>substrate</name>
    </ligand>
</feature>
<feature type="site" description="Important for catalytic activity" evidence="1">
    <location>
        <position position="210"/>
    </location>
</feature>
<organism>
    <name type="scientific">Chelativorans sp. (strain BNC1)</name>
    <dbReference type="NCBI Taxonomy" id="266779"/>
    <lineage>
        <taxon>Bacteria</taxon>
        <taxon>Pseudomonadati</taxon>
        <taxon>Pseudomonadota</taxon>
        <taxon>Alphaproteobacteria</taxon>
        <taxon>Hyphomicrobiales</taxon>
        <taxon>Phyllobacteriaceae</taxon>
        <taxon>Chelativorans</taxon>
    </lineage>
</organism>
<reference key="1">
    <citation type="submission" date="2006-06" db="EMBL/GenBank/DDBJ databases">
        <title>Complete sequence of chromosome of Mesorhizobium sp. BNC1.</title>
        <authorList>
            <consortium name="US DOE Joint Genome Institute"/>
            <person name="Copeland A."/>
            <person name="Lucas S."/>
            <person name="Lapidus A."/>
            <person name="Barry K."/>
            <person name="Detter J.C."/>
            <person name="Glavina del Rio T."/>
            <person name="Hammon N."/>
            <person name="Israni S."/>
            <person name="Dalin E."/>
            <person name="Tice H."/>
            <person name="Pitluck S."/>
            <person name="Chertkov O."/>
            <person name="Brettin T."/>
            <person name="Bruce D."/>
            <person name="Han C."/>
            <person name="Tapia R."/>
            <person name="Gilna P."/>
            <person name="Schmutz J."/>
            <person name="Larimer F."/>
            <person name="Land M."/>
            <person name="Hauser L."/>
            <person name="Kyrpides N."/>
            <person name="Mikhailova N."/>
            <person name="Richardson P."/>
        </authorList>
    </citation>
    <scope>NUCLEOTIDE SEQUENCE [LARGE SCALE GENOMIC DNA]</scope>
    <source>
        <strain>BNC1</strain>
    </source>
</reference>
<accession>Q11C48</accession>
<name>ADE_CHESB</name>
<dbReference type="EC" id="3.5.4.2" evidence="1"/>
<dbReference type="EMBL" id="CP000390">
    <property type="protein sequence ID" value="ABG65027.1"/>
    <property type="molecule type" value="Genomic_DNA"/>
</dbReference>
<dbReference type="SMR" id="Q11C48"/>
<dbReference type="STRING" id="266779.Meso_3659"/>
<dbReference type="KEGG" id="mes:Meso_3659"/>
<dbReference type="eggNOG" id="COG1816">
    <property type="taxonomic scope" value="Bacteria"/>
</dbReference>
<dbReference type="HOGENOM" id="CLU_039228_7_1_5"/>
<dbReference type="OrthoDB" id="105475at2"/>
<dbReference type="GO" id="GO:0000034">
    <property type="term" value="F:adenine deaminase activity"/>
    <property type="evidence" value="ECO:0007669"/>
    <property type="project" value="UniProtKB-UniRule"/>
</dbReference>
<dbReference type="GO" id="GO:0008270">
    <property type="term" value="F:zinc ion binding"/>
    <property type="evidence" value="ECO:0007669"/>
    <property type="project" value="UniProtKB-UniRule"/>
</dbReference>
<dbReference type="GO" id="GO:0006146">
    <property type="term" value="P:adenine catabolic process"/>
    <property type="evidence" value="ECO:0007669"/>
    <property type="project" value="UniProtKB-UniRule"/>
</dbReference>
<dbReference type="GO" id="GO:0043103">
    <property type="term" value="P:hypoxanthine salvage"/>
    <property type="evidence" value="ECO:0007669"/>
    <property type="project" value="UniProtKB-UniRule"/>
</dbReference>
<dbReference type="GO" id="GO:0009117">
    <property type="term" value="P:nucleotide metabolic process"/>
    <property type="evidence" value="ECO:0007669"/>
    <property type="project" value="UniProtKB-KW"/>
</dbReference>
<dbReference type="CDD" id="cd01320">
    <property type="entry name" value="ADA"/>
    <property type="match status" value="1"/>
</dbReference>
<dbReference type="Gene3D" id="3.20.20.140">
    <property type="entry name" value="Metal-dependent hydrolases"/>
    <property type="match status" value="1"/>
</dbReference>
<dbReference type="HAMAP" id="MF_01962">
    <property type="entry name" value="Adenine_deaminase"/>
    <property type="match status" value="1"/>
</dbReference>
<dbReference type="InterPro" id="IPR001365">
    <property type="entry name" value="A_deaminase_dom"/>
</dbReference>
<dbReference type="InterPro" id="IPR028892">
    <property type="entry name" value="ADE"/>
</dbReference>
<dbReference type="InterPro" id="IPR006330">
    <property type="entry name" value="Ado/ade_deaminase"/>
</dbReference>
<dbReference type="InterPro" id="IPR032466">
    <property type="entry name" value="Metal_Hydrolase"/>
</dbReference>
<dbReference type="NCBIfam" id="TIGR01430">
    <property type="entry name" value="aden_deam"/>
    <property type="match status" value="1"/>
</dbReference>
<dbReference type="NCBIfam" id="NF006848">
    <property type="entry name" value="PRK09358.1-3"/>
    <property type="match status" value="1"/>
</dbReference>
<dbReference type="PANTHER" id="PTHR43114">
    <property type="entry name" value="ADENINE DEAMINASE"/>
    <property type="match status" value="1"/>
</dbReference>
<dbReference type="PANTHER" id="PTHR43114:SF6">
    <property type="entry name" value="ADENINE DEAMINASE"/>
    <property type="match status" value="1"/>
</dbReference>
<dbReference type="Pfam" id="PF00962">
    <property type="entry name" value="A_deaminase"/>
    <property type="match status" value="1"/>
</dbReference>
<dbReference type="SUPFAM" id="SSF51556">
    <property type="entry name" value="Metallo-dependent hydrolases"/>
    <property type="match status" value="1"/>
</dbReference>
<keyword id="KW-0378">Hydrolase</keyword>
<keyword id="KW-0479">Metal-binding</keyword>
<keyword id="KW-0546">Nucleotide metabolism</keyword>
<keyword id="KW-0862">Zinc</keyword>
<comment type="function">
    <text evidence="1">Catalyzes the hydrolytic deamination of adenine to hypoxanthine. Plays an important role in the purine salvage pathway and in nitrogen catabolism.</text>
</comment>
<comment type="catalytic activity">
    <reaction evidence="1">
        <text>adenine + H2O + H(+) = hypoxanthine + NH4(+)</text>
        <dbReference type="Rhea" id="RHEA:23688"/>
        <dbReference type="ChEBI" id="CHEBI:15377"/>
        <dbReference type="ChEBI" id="CHEBI:15378"/>
        <dbReference type="ChEBI" id="CHEBI:16708"/>
        <dbReference type="ChEBI" id="CHEBI:17368"/>
        <dbReference type="ChEBI" id="CHEBI:28938"/>
        <dbReference type="EC" id="3.5.4.2"/>
    </reaction>
</comment>
<comment type="cofactor">
    <cofactor evidence="1">
        <name>Zn(2+)</name>
        <dbReference type="ChEBI" id="CHEBI:29105"/>
    </cofactor>
    <text evidence="1">Binds 1 zinc ion per subunit.</text>
</comment>
<comment type="similarity">
    <text evidence="1">Belongs to the metallo-dependent hydrolases superfamily. Adenosine and AMP deaminases family. Adenine deaminase type 2 subfamily.</text>
</comment>
<sequence length="325" mass="35034">MLLKAELHCHIEGAASPALVKAQARKYGADISSFIRGGAYYWQDFTTFLLAYDQAASLFRTQEDYALLAETYLKELAAGGAIYSEFFTSPDHAERAGLSPQAYTDGLAEGMVQAKAATGIESRMIVTGVRHFGPEAVEKAARFAASCEHPLVTGFGMAGDERAGHPRDFAYAFDIAREAGLGISIHAGEFGGAESVEAALDHIRPSRIGHGVRAIENPDLVRRIADEGVVLEVCPVSNVVLKVFPEFARHPFPQLVAAGCRVTLNSDDPPHFHTSLAREYAVAAEYFGLDETTLNAITSTAIEAAFVDEKTRAALFARLKPVVES</sequence>